<gene>
    <name evidence="1" type="primary">rplD</name>
    <name type="ordered locus">PEPE_1417</name>
</gene>
<dbReference type="EMBL" id="CP000422">
    <property type="protein sequence ID" value="ABJ68455.1"/>
    <property type="molecule type" value="Genomic_DNA"/>
</dbReference>
<dbReference type="RefSeq" id="WP_002833329.1">
    <property type="nucleotide sequence ID" value="NC_008525.1"/>
</dbReference>
<dbReference type="SMR" id="Q03EB7"/>
<dbReference type="STRING" id="278197.PEPE_1417"/>
<dbReference type="GeneID" id="33061441"/>
<dbReference type="KEGG" id="ppe:PEPE_1417"/>
<dbReference type="eggNOG" id="COG0088">
    <property type="taxonomic scope" value="Bacteria"/>
</dbReference>
<dbReference type="HOGENOM" id="CLU_041575_5_2_9"/>
<dbReference type="OrthoDB" id="9803201at2"/>
<dbReference type="Proteomes" id="UP000000773">
    <property type="component" value="Chromosome"/>
</dbReference>
<dbReference type="GO" id="GO:1990904">
    <property type="term" value="C:ribonucleoprotein complex"/>
    <property type="evidence" value="ECO:0007669"/>
    <property type="project" value="UniProtKB-KW"/>
</dbReference>
<dbReference type="GO" id="GO:0005840">
    <property type="term" value="C:ribosome"/>
    <property type="evidence" value="ECO:0007669"/>
    <property type="project" value="UniProtKB-KW"/>
</dbReference>
<dbReference type="GO" id="GO:0019843">
    <property type="term" value="F:rRNA binding"/>
    <property type="evidence" value="ECO:0007669"/>
    <property type="project" value="UniProtKB-UniRule"/>
</dbReference>
<dbReference type="GO" id="GO:0003735">
    <property type="term" value="F:structural constituent of ribosome"/>
    <property type="evidence" value="ECO:0007669"/>
    <property type="project" value="InterPro"/>
</dbReference>
<dbReference type="GO" id="GO:0006412">
    <property type="term" value="P:translation"/>
    <property type="evidence" value="ECO:0007669"/>
    <property type="project" value="UniProtKB-UniRule"/>
</dbReference>
<dbReference type="FunFam" id="3.40.1370.10:FF:000003">
    <property type="entry name" value="50S ribosomal protein L4"/>
    <property type="match status" value="1"/>
</dbReference>
<dbReference type="Gene3D" id="3.40.1370.10">
    <property type="match status" value="1"/>
</dbReference>
<dbReference type="HAMAP" id="MF_01328_B">
    <property type="entry name" value="Ribosomal_uL4_B"/>
    <property type="match status" value="1"/>
</dbReference>
<dbReference type="InterPro" id="IPR002136">
    <property type="entry name" value="Ribosomal_uL4"/>
</dbReference>
<dbReference type="InterPro" id="IPR013005">
    <property type="entry name" value="Ribosomal_uL4-like"/>
</dbReference>
<dbReference type="InterPro" id="IPR023574">
    <property type="entry name" value="Ribosomal_uL4_dom_sf"/>
</dbReference>
<dbReference type="NCBIfam" id="TIGR03953">
    <property type="entry name" value="rplD_bact"/>
    <property type="match status" value="1"/>
</dbReference>
<dbReference type="PANTHER" id="PTHR10746">
    <property type="entry name" value="50S RIBOSOMAL PROTEIN L4"/>
    <property type="match status" value="1"/>
</dbReference>
<dbReference type="PANTHER" id="PTHR10746:SF6">
    <property type="entry name" value="LARGE RIBOSOMAL SUBUNIT PROTEIN UL4M"/>
    <property type="match status" value="1"/>
</dbReference>
<dbReference type="Pfam" id="PF00573">
    <property type="entry name" value="Ribosomal_L4"/>
    <property type="match status" value="1"/>
</dbReference>
<dbReference type="SUPFAM" id="SSF52166">
    <property type="entry name" value="Ribosomal protein L4"/>
    <property type="match status" value="1"/>
</dbReference>
<name>RL4_PEDPA</name>
<sequence>MANVSLFKQDGTKNGDVELNADIFGIEPNNDVVFEAVVMQRASMRQGTHAVKNRSAVRGGGRKPWRQKGTGRARQGSIRSPQWRGGGIVFGPTPRSYAYSIPKKMRRLALKSVLSQKVLDESLVVVDEFKFETPKTKDFAQSLGNLNVDKKALLVLEEDNESAVLAARNLSNVKIVEPEGINVLDIMNSDKLVITQKALSQVEEALA</sequence>
<evidence type="ECO:0000255" key="1">
    <source>
        <dbReference type="HAMAP-Rule" id="MF_01328"/>
    </source>
</evidence>
<evidence type="ECO:0000256" key="2">
    <source>
        <dbReference type="SAM" id="MobiDB-lite"/>
    </source>
</evidence>
<evidence type="ECO:0000305" key="3"/>
<protein>
    <recommendedName>
        <fullName evidence="1">Large ribosomal subunit protein uL4</fullName>
    </recommendedName>
    <alternativeName>
        <fullName evidence="3">50S ribosomal protein L4</fullName>
    </alternativeName>
</protein>
<accession>Q03EB7</accession>
<organism>
    <name type="scientific">Pediococcus pentosaceus (strain ATCC 25745 / CCUG 21536 / LMG 10740 / 183-1w)</name>
    <dbReference type="NCBI Taxonomy" id="278197"/>
    <lineage>
        <taxon>Bacteria</taxon>
        <taxon>Bacillati</taxon>
        <taxon>Bacillota</taxon>
        <taxon>Bacilli</taxon>
        <taxon>Lactobacillales</taxon>
        <taxon>Lactobacillaceae</taxon>
        <taxon>Pediococcus</taxon>
    </lineage>
</organism>
<proteinExistence type="inferred from homology"/>
<comment type="function">
    <text evidence="1">One of the primary rRNA binding proteins, this protein initially binds near the 5'-end of the 23S rRNA. It is important during the early stages of 50S assembly. It makes multiple contacts with different domains of the 23S rRNA in the assembled 50S subunit and ribosome.</text>
</comment>
<comment type="function">
    <text evidence="1">Forms part of the polypeptide exit tunnel.</text>
</comment>
<comment type="subunit">
    <text evidence="1">Part of the 50S ribosomal subunit.</text>
</comment>
<comment type="similarity">
    <text evidence="1">Belongs to the universal ribosomal protein uL4 family.</text>
</comment>
<keyword id="KW-0687">Ribonucleoprotein</keyword>
<keyword id="KW-0689">Ribosomal protein</keyword>
<keyword id="KW-0694">RNA-binding</keyword>
<keyword id="KW-0699">rRNA-binding</keyword>
<reference key="1">
    <citation type="journal article" date="2006" name="Proc. Natl. Acad. Sci. U.S.A.">
        <title>Comparative genomics of the lactic acid bacteria.</title>
        <authorList>
            <person name="Makarova K.S."/>
            <person name="Slesarev A."/>
            <person name="Wolf Y.I."/>
            <person name="Sorokin A."/>
            <person name="Mirkin B."/>
            <person name="Koonin E.V."/>
            <person name="Pavlov A."/>
            <person name="Pavlova N."/>
            <person name="Karamychev V."/>
            <person name="Polouchine N."/>
            <person name="Shakhova V."/>
            <person name="Grigoriev I."/>
            <person name="Lou Y."/>
            <person name="Rohksar D."/>
            <person name="Lucas S."/>
            <person name="Huang K."/>
            <person name="Goodstein D.M."/>
            <person name="Hawkins T."/>
            <person name="Plengvidhya V."/>
            <person name="Welker D."/>
            <person name="Hughes J."/>
            <person name="Goh Y."/>
            <person name="Benson A."/>
            <person name="Baldwin K."/>
            <person name="Lee J.-H."/>
            <person name="Diaz-Muniz I."/>
            <person name="Dosti B."/>
            <person name="Smeianov V."/>
            <person name="Wechter W."/>
            <person name="Barabote R."/>
            <person name="Lorca G."/>
            <person name="Altermann E."/>
            <person name="Barrangou R."/>
            <person name="Ganesan B."/>
            <person name="Xie Y."/>
            <person name="Rawsthorne H."/>
            <person name="Tamir D."/>
            <person name="Parker C."/>
            <person name="Breidt F."/>
            <person name="Broadbent J.R."/>
            <person name="Hutkins R."/>
            <person name="O'Sullivan D."/>
            <person name="Steele J."/>
            <person name="Unlu G."/>
            <person name="Saier M.H. Jr."/>
            <person name="Klaenhammer T."/>
            <person name="Richardson P."/>
            <person name="Kozyavkin S."/>
            <person name="Weimer B.C."/>
            <person name="Mills D.A."/>
        </authorList>
    </citation>
    <scope>NUCLEOTIDE SEQUENCE [LARGE SCALE GENOMIC DNA]</scope>
    <source>
        <strain>ATCC 25745 / CCUG 21536 / LMG 10740 / 183-1w</strain>
    </source>
</reference>
<feature type="chain" id="PRO_1000052460" description="Large ribosomal subunit protein uL4">
    <location>
        <begin position="1"/>
        <end position="207"/>
    </location>
</feature>
<feature type="region of interest" description="Disordered" evidence="2">
    <location>
        <begin position="45"/>
        <end position="78"/>
    </location>
</feature>
<feature type="compositionally biased region" description="Basic residues" evidence="2">
    <location>
        <begin position="60"/>
        <end position="71"/>
    </location>
</feature>